<gene>
    <name type="primary">DEFB119</name>
    <name type="synonym">DEFB120</name>
</gene>
<feature type="signal peptide" evidence="2">
    <location>
        <begin position="1"/>
        <end position="21"/>
    </location>
</feature>
<feature type="peptide" id="PRO_0000289830" description="Beta-defensin 119">
    <location>
        <begin position="22"/>
        <end position="84"/>
    </location>
</feature>
<feature type="disulfide bond" evidence="1">
    <location>
        <begin position="28"/>
        <end position="55"/>
    </location>
</feature>
<feature type="disulfide bond" evidence="1">
    <location>
        <begin position="35"/>
        <end position="49"/>
    </location>
</feature>
<feature type="disulfide bond" evidence="1">
    <location>
        <begin position="39"/>
        <end position="56"/>
    </location>
</feature>
<feature type="splice variant" id="VSP_029870" description="In isoform 2." evidence="3">
    <original>GKRHILRCMGNSGICRASCKKNEQPYLYCRNYQSCCLQSYMRISISGKEEDTDWSYEKQWPRLP</original>
    <variation>VECWMDGHCRLLCKDGEDSIIRCRNRKRCCVPSHYLTIQPVTIHGILGWTTPQMSTTAPKTKTNITNR</variation>
    <location>
        <begin position="21"/>
        <end position="84"/>
    </location>
</feature>
<accession>A4H225</accession>
<accession>A4H230</accession>
<sequence length="84" mass="9883">MKLLYLFLAILLAIEEPVISGKRHILRCMGNSGICRASCKKNEQPYLYCRNYQSCCLQSYMRISISGKEEDTDWSYEKQWPRLP</sequence>
<keyword id="KW-0025">Alternative splicing</keyword>
<keyword id="KW-0044">Antibiotic</keyword>
<keyword id="KW-0929">Antimicrobial</keyword>
<keyword id="KW-0211">Defensin</keyword>
<keyword id="KW-1015">Disulfide bond</keyword>
<keyword id="KW-1185">Reference proteome</keyword>
<keyword id="KW-0964">Secreted</keyword>
<keyword id="KW-0732">Signal</keyword>
<protein>
    <recommendedName>
        <fullName>Beta-defensin 119</fullName>
    </recommendedName>
    <alternativeName>
        <fullName>Beta-defensin 120</fullName>
    </alternativeName>
    <alternativeName>
        <fullName>Defensin, beta 119</fullName>
    </alternativeName>
    <alternativeName>
        <fullName>Defensin, beta 120</fullName>
    </alternativeName>
</protein>
<proteinExistence type="inferred from homology"/>
<name>DB119_GORGO</name>
<dbReference type="EMBL" id="AM410130">
    <property type="protein sequence ID" value="CAL68945.1"/>
    <property type="molecule type" value="Genomic_DNA"/>
</dbReference>
<dbReference type="EMBL" id="AM410135">
    <property type="protein sequence ID" value="CAL68950.1"/>
    <property type="molecule type" value="Genomic_DNA"/>
</dbReference>
<dbReference type="RefSeq" id="XP_004061991.3">
    <molecule id="A4H225-1"/>
    <property type="nucleotide sequence ID" value="XM_004061943.4"/>
</dbReference>
<dbReference type="Ensembl" id="ENSGGOT00000027291.2">
    <molecule id="A4H225-1"/>
    <property type="protein sequence ID" value="ENSGGOP00000024051.1"/>
    <property type="gene ID" value="ENSGGOG00000005372.3"/>
</dbReference>
<dbReference type="GeneID" id="101138717"/>
<dbReference type="KEGG" id="ggo:101138717"/>
<dbReference type="CTD" id="245932"/>
<dbReference type="GeneTree" id="ENSGT00390000000279"/>
<dbReference type="HOGENOM" id="CLU_193927_0_0_1"/>
<dbReference type="InParanoid" id="A4H225"/>
<dbReference type="OMA" id="QENRWPK"/>
<dbReference type="Proteomes" id="UP000001519">
    <property type="component" value="Chromosome 20"/>
</dbReference>
<dbReference type="Bgee" id="ENSGGOG00000005372">
    <property type="expression patterns" value="Expressed in testis"/>
</dbReference>
<dbReference type="GO" id="GO:0005576">
    <property type="term" value="C:extracellular region"/>
    <property type="evidence" value="ECO:0007669"/>
    <property type="project" value="UniProtKB-SubCell"/>
</dbReference>
<dbReference type="GO" id="GO:0050829">
    <property type="term" value="P:defense response to Gram-negative bacterium"/>
    <property type="evidence" value="ECO:0007669"/>
    <property type="project" value="InterPro"/>
</dbReference>
<dbReference type="GO" id="GO:0050830">
    <property type="term" value="P:defense response to Gram-positive bacterium"/>
    <property type="evidence" value="ECO:0007669"/>
    <property type="project" value="InterPro"/>
</dbReference>
<dbReference type="InterPro" id="IPR028060">
    <property type="entry name" value="Defensin_big_dom"/>
</dbReference>
<dbReference type="PANTHER" id="PTHR47902">
    <property type="entry name" value="BETA-DEFENSIN 119"/>
    <property type="match status" value="1"/>
</dbReference>
<dbReference type="PANTHER" id="PTHR47902:SF1">
    <property type="entry name" value="BETA-DEFENSIN 119"/>
    <property type="match status" value="1"/>
</dbReference>
<dbReference type="Pfam" id="PF14862">
    <property type="entry name" value="Defensin_big"/>
    <property type="match status" value="1"/>
</dbReference>
<reference key="1">
    <citation type="submission" date="2006-11" db="EMBL/GenBank/DDBJ databases">
        <title>Evolution and sequence variation of human beta-defensin genes.</title>
        <authorList>
            <person name="Hollox E.J."/>
            <person name="Armour J.A.L."/>
        </authorList>
    </citation>
    <scope>NUCLEOTIDE SEQUENCE [GENOMIC DNA] (ISOFORMS 1 AND 2)</scope>
</reference>
<evidence type="ECO:0000250" key="1"/>
<evidence type="ECO:0000255" key="2"/>
<evidence type="ECO:0000305" key="3"/>
<organism>
    <name type="scientific">Gorilla gorilla gorilla</name>
    <name type="common">Western lowland gorilla</name>
    <dbReference type="NCBI Taxonomy" id="9595"/>
    <lineage>
        <taxon>Eukaryota</taxon>
        <taxon>Metazoa</taxon>
        <taxon>Chordata</taxon>
        <taxon>Craniata</taxon>
        <taxon>Vertebrata</taxon>
        <taxon>Euteleostomi</taxon>
        <taxon>Mammalia</taxon>
        <taxon>Eutheria</taxon>
        <taxon>Euarchontoglires</taxon>
        <taxon>Primates</taxon>
        <taxon>Haplorrhini</taxon>
        <taxon>Catarrhini</taxon>
        <taxon>Hominidae</taxon>
        <taxon>Gorilla</taxon>
    </lineage>
</organism>
<comment type="function">
    <text evidence="3">Has antibacterial activity.</text>
</comment>
<comment type="subcellular location">
    <subcellularLocation>
        <location evidence="3">Secreted</location>
    </subcellularLocation>
</comment>
<comment type="alternative products">
    <event type="alternative splicing"/>
    <isoform>
        <id>A4H225-1</id>
        <name>1</name>
        <sequence type="displayed"/>
    </isoform>
    <isoform>
        <id>A4H225-2</id>
        <name>2</name>
        <sequence type="described" ref="VSP_029870"/>
    </isoform>
</comment>
<comment type="similarity">
    <text evidence="3">Belongs to the beta-defensin family.</text>
</comment>